<sequence>MAASETAPFGVSAASKGGGGVAGARAQHGQLAVAGRVHDALVFAAGAVAAVLVLLATASFLSPMPVTNLVAFRSLPVSVASTSAASAAIDADVGVRGGPGAAGRTFYDDSRVSYAVEVGRRGGITGWDARRAAWMRLRYPRGLNATAAGRERVVMVSGSQAPPCRGEGGDHLLLRFLKNKVDYCRLHGVELLYNNALLQPRMLAYWAKIPAVRAAMLAHPDAEWVWWVDADAVFTDMDFSLPLHKYKDHNLVVYGWNKEVYGERSWVGLNAGVFLIRNCQWSLDFMDSWARMGPASPEYARWGSVLHDTLRGKSDKESDDQSALVYLLSEHEEKWGAKTYLEKGYFFQGYWVEVVDRLDDIAARYEAAERRPSAAAAHLRRRHAEREHERYAAARNAAVRGAVPGPAGGGQSGWRRPFVTHFTGCQPCGGEPNKIYSKKSCADGMNRALNFADDQVLRNYGYRHKDPLSDEVRPLPFDYPAAR</sequence>
<protein>
    <recommendedName>
        <fullName evidence="4">Probable glycosyltransferase 6</fullName>
        <ecNumber evidence="4">2.4.-.-</ecNumber>
    </recommendedName>
</protein>
<feature type="chain" id="PRO_0000434334" description="Probable glycosyltransferase 6">
    <location>
        <begin position="1"/>
        <end position="483"/>
    </location>
</feature>
<feature type="topological domain" description="Cytoplasmic" evidence="4">
    <location>
        <begin position="1"/>
        <end position="40"/>
    </location>
</feature>
<feature type="transmembrane region" description="Helical; Signal-anchor for type II membrane protein" evidence="2">
    <location>
        <begin position="41"/>
        <end position="61"/>
    </location>
</feature>
<feature type="topological domain" description="Lumenal" evidence="4">
    <location>
        <begin position="62"/>
        <end position="483"/>
    </location>
</feature>
<feature type="glycosylation site" description="N-linked (GlcNAc...) asparagine" evidence="3">
    <location>
        <position position="144"/>
    </location>
</feature>
<evidence type="ECO:0000250" key="1">
    <source>
        <dbReference type="UniProtKB" id="Q10MQ0"/>
    </source>
</evidence>
<evidence type="ECO:0000255" key="2"/>
<evidence type="ECO:0000255" key="3">
    <source>
        <dbReference type="PROSITE-ProRule" id="PRU00498"/>
    </source>
</evidence>
<evidence type="ECO:0000305" key="4"/>
<evidence type="ECO:0000312" key="5">
    <source>
        <dbReference type="EMBL" id="EAY81250.1"/>
    </source>
</evidence>
<gene>
    <name evidence="4" type="primary">GT6</name>
    <name evidence="5" type="ORF">OsI_36429</name>
</gene>
<keyword id="KW-0325">Glycoprotein</keyword>
<keyword id="KW-0328">Glycosyltransferase</keyword>
<keyword id="KW-0333">Golgi apparatus</keyword>
<keyword id="KW-0472">Membrane</keyword>
<keyword id="KW-1185">Reference proteome</keyword>
<keyword id="KW-0735">Signal-anchor</keyword>
<keyword id="KW-0808">Transferase</keyword>
<keyword id="KW-0812">Transmembrane</keyword>
<keyword id="KW-1133">Transmembrane helix</keyword>
<name>GT6_ORYSI</name>
<accession>A2ZF66</accession>
<reference key="1">
    <citation type="journal article" date="2005" name="PLoS Biol.">
        <title>The genomes of Oryza sativa: a history of duplications.</title>
        <authorList>
            <person name="Yu J."/>
            <person name="Wang J."/>
            <person name="Lin W."/>
            <person name="Li S."/>
            <person name="Li H."/>
            <person name="Zhou J."/>
            <person name="Ni P."/>
            <person name="Dong W."/>
            <person name="Hu S."/>
            <person name="Zeng C."/>
            <person name="Zhang J."/>
            <person name="Zhang Y."/>
            <person name="Li R."/>
            <person name="Xu Z."/>
            <person name="Li S."/>
            <person name="Li X."/>
            <person name="Zheng H."/>
            <person name="Cong L."/>
            <person name="Lin L."/>
            <person name="Yin J."/>
            <person name="Geng J."/>
            <person name="Li G."/>
            <person name="Shi J."/>
            <person name="Liu J."/>
            <person name="Lv H."/>
            <person name="Li J."/>
            <person name="Wang J."/>
            <person name="Deng Y."/>
            <person name="Ran L."/>
            <person name="Shi X."/>
            <person name="Wang X."/>
            <person name="Wu Q."/>
            <person name="Li C."/>
            <person name="Ren X."/>
            <person name="Wang J."/>
            <person name="Wang X."/>
            <person name="Li D."/>
            <person name="Liu D."/>
            <person name="Zhang X."/>
            <person name="Ji Z."/>
            <person name="Zhao W."/>
            <person name="Sun Y."/>
            <person name="Zhang Z."/>
            <person name="Bao J."/>
            <person name="Han Y."/>
            <person name="Dong L."/>
            <person name="Ji J."/>
            <person name="Chen P."/>
            <person name="Wu S."/>
            <person name="Liu J."/>
            <person name="Xiao Y."/>
            <person name="Bu D."/>
            <person name="Tan J."/>
            <person name="Yang L."/>
            <person name="Ye C."/>
            <person name="Zhang J."/>
            <person name="Xu J."/>
            <person name="Zhou Y."/>
            <person name="Yu Y."/>
            <person name="Zhang B."/>
            <person name="Zhuang S."/>
            <person name="Wei H."/>
            <person name="Liu B."/>
            <person name="Lei M."/>
            <person name="Yu H."/>
            <person name="Li Y."/>
            <person name="Xu H."/>
            <person name="Wei S."/>
            <person name="He X."/>
            <person name="Fang L."/>
            <person name="Zhang Z."/>
            <person name="Zhang Y."/>
            <person name="Huang X."/>
            <person name="Su Z."/>
            <person name="Tong W."/>
            <person name="Li J."/>
            <person name="Tong Z."/>
            <person name="Li S."/>
            <person name="Ye J."/>
            <person name="Wang L."/>
            <person name="Fang L."/>
            <person name="Lei T."/>
            <person name="Chen C.-S."/>
            <person name="Chen H.-C."/>
            <person name="Xu Z."/>
            <person name="Li H."/>
            <person name="Huang H."/>
            <person name="Zhang F."/>
            <person name="Xu H."/>
            <person name="Li N."/>
            <person name="Zhao C."/>
            <person name="Li S."/>
            <person name="Dong L."/>
            <person name="Huang Y."/>
            <person name="Li L."/>
            <person name="Xi Y."/>
            <person name="Qi Q."/>
            <person name="Li W."/>
            <person name="Zhang B."/>
            <person name="Hu W."/>
            <person name="Zhang Y."/>
            <person name="Tian X."/>
            <person name="Jiao Y."/>
            <person name="Liang X."/>
            <person name="Jin J."/>
            <person name="Gao L."/>
            <person name="Zheng W."/>
            <person name="Hao B."/>
            <person name="Liu S.-M."/>
            <person name="Wang W."/>
            <person name="Yuan L."/>
            <person name="Cao M."/>
            <person name="McDermott J."/>
            <person name="Samudrala R."/>
            <person name="Wang J."/>
            <person name="Wong G.K.-S."/>
            <person name="Yang H."/>
        </authorList>
    </citation>
    <scope>NUCLEOTIDE SEQUENCE [LARGE SCALE GENOMIC DNA]</scope>
    <source>
        <strain>cv. 93-11</strain>
    </source>
</reference>
<dbReference type="EC" id="2.4.-.-" evidence="4"/>
<dbReference type="EMBL" id="CM000136">
    <property type="protein sequence ID" value="EAY81250.1"/>
    <property type="molecule type" value="Genomic_DNA"/>
</dbReference>
<dbReference type="SMR" id="A2ZF66"/>
<dbReference type="STRING" id="39946.A2ZF66"/>
<dbReference type="GlyCosmos" id="A2ZF66">
    <property type="glycosylation" value="1 site, No reported glycans"/>
</dbReference>
<dbReference type="EnsemblPlants" id="BGIOSGA033833-TA">
    <property type="protein sequence ID" value="BGIOSGA033833-PA"/>
    <property type="gene ID" value="BGIOSGA033833"/>
</dbReference>
<dbReference type="Gramene" id="BGIOSGA033833-TA">
    <property type="protein sequence ID" value="BGIOSGA033833-PA"/>
    <property type="gene ID" value="BGIOSGA033833"/>
</dbReference>
<dbReference type="HOGENOM" id="CLU_034328_0_0_1"/>
<dbReference type="OMA" id="MDLIDTW"/>
<dbReference type="Proteomes" id="UP000007015">
    <property type="component" value="Chromosome 11"/>
</dbReference>
<dbReference type="GO" id="GO:0005768">
    <property type="term" value="C:endosome"/>
    <property type="evidence" value="ECO:0007669"/>
    <property type="project" value="TreeGrafter"/>
</dbReference>
<dbReference type="GO" id="GO:0000139">
    <property type="term" value="C:Golgi membrane"/>
    <property type="evidence" value="ECO:0007669"/>
    <property type="project" value="UniProtKB-SubCell"/>
</dbReference>
<dbReference type="GO" id="GO:0005802">
    <property type="term" value="C:trans-Golgi network"/>
    <property type="evidence" value="ECO:0007669"/>
    <property type="project" value="TreeGrafter"/>
</dbReference>
<dbReference type="GO" id="GO:0008378">
    <property type="term" value="F:galactosyltransferase activity"/>
    <property type="evidence" value="ECO:0007669"/>
    <property type="project" value="TreeGrafter"/>
</dbReference>
<dbReference type="FunFam" id="3.90.550.10:FF:000127">
    <property type="entry name" value="Probable glycosyltransferase 7"/>
    <property type="match status" value="1"/>
</dbReference>
<dbReference type="Gene3D" id="3.90.550.10">
    <property type="entry name" value="Spore Coat Polysaccharide Biosynthesis Protein SpsA, Chain A"/>
    <property type="match status" value="1"/>
</dbReference>
<dbReference type="InterPro" id="IPR008630">
    <property type="entry name" value="Glyco_trans_34"/>
</dbReference>
<dbReference type="InterPro" id="IPR029044">
    <property type="entry name" value="Nucleotide-diphossugar_trans"/>
</dbReference>
<dbReference type="PANTHER" id="PTHR31311:SF45">
    <property type="entry name" value="GLYCOSYLTRANSFERASE 6-RELATED"/>
    <property type="match status" value="1"/>
</dbReference>
<dbReference type="PANTHER" id="PTHR31311">
    <property type="entry name" value="XYLOGLUCAN 6-XYLOSYLTRANSFERASE 5-RELATED-RELATED"/>
    <property type="match status" value="1"/>
</dbReference>
<dbReference type="Pfam" id="PF05637">
    <property type="entry name" value="Glyco_transf_34"/>
    <property type="match status" value="1"/>
</dbReference>
<organism>
    <name type="scientific">Oryza sativa subsp. indica</name>
    <name type="common">Rice</name>
    <dbReference type="NCBI Taxonomy" id="39946"/>
    <lineage>
        <taxon>Eukaryota</taxon>
        <taxon>Viridiplantae</taxon>
        <taxon>Streptophyta</taxon>
        <taxon>Embryophyta</taxon>
        <taxon>Tracheophyta</taxon>
        <taxon>Spermatophyta</taxon>
        <taxon>Magnoliopsida</taxon>
        <taxon>Liliopsida</taxon>
        <taxon>Poales</taxon>
        <taxon>Poaceae</taxon>
        <taxon>BOP clade</taxon>
        <taxon>Oryzoideae</taxon>
        <taxon>Oryzeae</taxon>
        <taxon>Oryzinae</taxon>
        <taxon>Oryza</taxon>
        <taxon>Oryza sativa</taxon>
    </lineage>
</organism>
<proteinExistence type="inferred from homology"/>
<comment type="function">
    <text evidence="1">Probable glycosyltransferase that may be involved in the biosynthesis of xyloglucan.</text>
</comment>
<comment type="subcellular location">
    <subcellularLocation>
        <location evidence="4">Golgi apparatus membrane</location>
        <topology evidence="4">Single-pass type II membrane protein</topology>
    </subcellularLocation>
</comment>
<comment type="similarity">
    <text evidence="4">Belongs to the glycosyltransferase 34 family.</text>
</comment>